<protein>
    <recommendedName>
        <fullName evidence="1">Phospho-N-acetylmuramoyl-pentapeptide-transferase</fullName>
        <ecNumber evidence="1">2.7.8.13</ecNumber>
    </recommendedName>
    <alternativeName>
        <fullName evidence="1">UDP-MurNAc-pentapeptide phosphotransferase</fullName>
    </alternativeName>
</protein>
<accession>B3GZK5</accession>
<organism>
    <name type="scientific">Actinobacillus pleuropneumoniae serotype 7 (strain AP76)</name>
    <dbReference type="NCBI Taxonomy" id="537457"/>
    <lineage>
        <taxon>Bacteria</taxon>
        <taxon>Pseudomonadati</taxon>
        <taxon>Pseudomonadota</taxon>
        <taxon>Gammaproteobacteria</taxon>
        <taxon>Pasteurellales</taxon>
        <taxon>Pasteurellaceae</taxon>
        <taxon>Actinobacillus</taxon>
    </lineage>
</organism>
<evidence type="ECO:0000255" key="1">
    <source>
        <dbReference type="HAMAP-Rule" id="MF_00038"/>
    </source>
</evidence>
<proteinExistence type="inferred from homology"/>
<sequence>MLVWLAEYLVQYNTAFNVVSYITFRAIMALLTAMGIGLWIGPEVIRRLQLLKFGQEVRNDGPESHFKKRGTPTMGGIMILIAIGVSTLLWADLRNSYVWFVLFVLFGYGAVGFVDDYWKIKRKNTDGLIARWKYFWLSVIALIAVFGIYAVGKDTAATQLVVPFFKEFMPQLGIFFIILSYFVIVGTSNAVNLTDGLDGLAIVPTIMVASAFALIAWATGNFNFAQYLHIPFVPNAGELVILCTAIVGAGLGFLWYNTYPAQVFMGDVGSLSLGGALGTIAVLVRQELLLVIMGGVFVVEALSVILQVGSYKLRQKRIFRMAPIHHHFELKGWPEPRVIVCFWIITLMLVLIGLVTLKLR</sequence>
<keyword id="KW-0131">Cell cycle</keyword>
<keyword id="KW-0132">Cell division</keyword>
<keyword id="KW-0997">Cell inner membrane</keyword>
<keyword id="KW-1003">Cell membrane</keyword>
<keyword id="KW-0133">Cell shape</keyword>
<keyword id="KW-0961">Cell wall biogenesis/degradation</keyword>
<keyword id="KW-0460">Magnesium</keyword>
<keyword id="KW-0472">Membrane</keyword>
<keyword id="KW-0479">Metal-binding</keyword>
<keyword id="KW-0573">Peptidoglycan synthesis</keyword>
<keyword id="KW-0808">Transferase</keyword>
<keyword id="KW-0812">Transmembrane</keyword>
<keyword id="KW-1133">Transmembrane helix</keyword>
<feature type="chain" id="PRO_1000090584" description="Phospho-N-acetylmuramoyl-pentapeptide-transferase">
    <location>
        <begin position="1"/>
        <end position="360"/>
    </location>
</feature>
<feature type="transmembrane region" description="Helical" evidence="1">
    <location>
        <begin position="21"/>
        <end position="41"/>
    </location>
</feature>
<feature type="transmembrane region" description="Helical" evidence="1">
    <location>
        <begin position="73"/>
        <end position="93"/>
    </location>
</feature>
<feature type="transmembrane region" description="Helical" evidence="1">
    <location>
        <begin position="98"/>
        <end position="118"/>
    </location>
</feature>
<feature type="transmembrane region" description="Helical" evidence="1">
    <location>
        <begin position="132"/>
        <end position="152"/>
    </location>
</feature>
<feature type="transmembrane region" description="Helical" evidence="1">
    <location>
        <begin position="168"/>
        <end position="188"/>
    </location>
</feature>
<feature type="transmembrane region" description="Helical" evidence="1">
    <location>
        <begin position="199"/>
        <end position="219"/>
    </location>
</feature>
<feature type="transmembrane region" description="Helical" evidence="1">
    <location>
        <begin position="236"/>
        <end position="256"/>
    </location>
</feature>
<feature type="transmembrane region" description="Helical" evidence="1">
    <location>
        <begin position="263"/>
        <end position="283"/>
    </location>
</feature>
<feature type="transmembrane region" description="Helical" evidence="1">
    <location>
        <begin position="288"/>
        <end position="308"/>
    </location>
</feature>
<feature type="transmembrane region" description="Helical" evidence="1">
    <location>
        <begin position="338"/>
        <end position="358"/>
    </location>
</feature>
<name>MRAY_ACTP7</name>
<reference key="1">
    <citation type="submission" date="2008-06" db="EMBL/GenBank/DDBJ databases">
        <title>Genome and proteome analysis of A. pleuropneumoniae serotype 7.</title>
        <authorList>
            <person name="Linke B."/>
            <person name="Buettner F."/>
            <person name="Martinez-Arias R."/>
            <person name="Goesmann A."/>
            <person name="Baltes N."/>
            <person name="Tegetmeyer H."/>
            <person name="Singh M."/>
            <person name="Gerlach G.F."/>
        </authorList>
    </citation>
    <scope>NUCLEOTIDE SEQUENCE [LARGE SCALE GENOMIC DNA]</scope>
    <source>
        <strain>AP76</strain>
    </source>
</reference>
<dbReference type="EC" id="2.7.8.13" evidence="1"/>
<dbReference type="EMBL" id="CP001091">
    <property type="protein sequence ID" value="ACE60667.1"/>
    <property type="molecule type" value="Genomic_DNA"/>
</dbReference>
<dbReference type="RefSeq" id="WP_012478273.1">
    <property type="nucleotide sequence ID" value="NC_010939.1"/>
</dbReference>
<dbReference type="SMR" id="B3GZK5"/>
<dbReference type="KEGG" id="apa:APP7_0015"/>
<dbReference type="HOGENOM" id="CLU_023982_0_0_6"/>
<dbReference type="UniPathway" id="UPA00219"/>
<dbReference type="Proteomes" id="UP000001226">
    <property type="component" value="Chromosome"/>
</dbReference>
<dbReference type="GO" id="GO:0005886">
    <property type="term" value="C:plasma membrane"/>
    <property type="evidence" value="ECO:0007669"/>
    <property type="project" value="UniProtKB-SubCell"/>
</dbReference>
<dbReference type="GO" id="GO:0046872">
    <property type="term" value="F:metal ion binding"/>
    <property type="evidence" value="ECO:0007669"/>
    <property type="project" value="UniProtKB-KW"/>
</dbReference>
<dbReference type="GO" id="GO:0008963">
    <property type="term" value="F:phospho-N-acetylmuramoyl-pentapeptide-transferase activity"/>
    <property type="evidence" value="ECO:0007669"/>
    <property type="project" value="UniProtKB-UniRule"/>
</dbReference>
<dbReference type="GO" id="GO:0051992">
    <property type="term" value="F:UDP-N-acetylmuramoyl-L-alanyl-D-glutamyl-meso-2,6-diaminopimelyl-D-alanyl-D-alanine:undecaprenyl-phosphate transferase activity"/>
    <property type="evidence" value="ECO:0007669"/>
    <property type="project" value="RHEA"/>
</dbReference>
<dbReference type="GO" id="GO:0051301">
    <property type="term" value="P:cell division"/>
    <property type="evidence" value="ECO:0007669"/>
    <property type="project" value="UniProtKB-KW"/>
</dbReference>
<dbReference type="GO" id="GO:0071555">
    <property type="term" value="P:cell wall organization"/>
    <property type="evidence" value="ECO:0007669"/>
    <property type="project" value="UniProtKB-KW"/>
</dbReference>
<dbReference type="GO" id="GO:0009252">
    <property type="term" value="P:peptidoglycan biosynthetic process"/>
    <property type="evidence" value="ECO:0007669"/>
    <property type="project" value="UniProtKB-UniRule"/>
</dbReference>
<dbReference type="GO" id="GO:0008360">
    <property type="term" value="P:regulation of cell shape"/>
    <property type="evidence" value="ECO:0007669"/>
    <property type="project" value="UniProtKB-KW"/>
</dbReference>
<dbReference type="CDD" id="cd06852">
    <property type="entry name" value="GT_MraY"/>
    <property type="match status" value="1"/>
</dbReference>
<dbReference type="HAMAP" id="MF_00038">
    <property type="entry name" value="MraY"/>
    <property type="match status" value="1"/>
</dbReference>
<dbReference type="InterPro" id="IPR000715">
    <property type="entry name" value="Glycosyl_transferase_4"/>
</dbReference>
<dbReference type="InterPro" id="IPR003524">
    <property type="entry name" value="PNAcMuramoyl-5peptid_Trfase"/>
</dbReference>
<dbReference type="InterPro" id="IPR018480">
    <property type="entry name" value="PNAcMuramoyl-5peptid_Trfase_CS"/>
</dbReference>
<dbReference type="NCBIfam" id="TIGR00445">
    <property type="entry name" value="mraY"/>
    <property type="match status" value="1"/>
</dbReference>
<dbReference type="PANTHER" id="PTHR22926">
    <property type="entry name" value="PHOSPHO-N-ACETYLMURAMOYL-PENTAPEPTIDE-TRANSFERASE"/>
    <property type="match status" value="1"/>
</dbReference>
<dbReference type="PANTHER" id="PTHR22926:SF5">
    <property type="entry name" value="PHOSPHO-N-ACETYLMURAMOYL-PENTAPEPTIDE-TRANSFERASE HOMOLOG"/>
    <property type="match status" value="1"/>
</dbReference>
<dbReference type="Pfam" id="PF00953">
    <property type="entry name" value="Glycos_transf_4"/>
    <property type="match status" value="1"/>
</dbReference>
<dbReference type="Pfam" id="PF10555">
    <property type="entry name" value="MraY_sig1"/>
    <property type="match status" value="1"/>
</dbReference>
<dbReference type="PROSITE" id="PS01347">
    <property type="entry name" value="MRAY_1"/>
    <property type="match status" value="1"/>
</dbReference>
<dbReference type="PROSITE" id="PS01348">
    <property type="entry name" value="MRAY_2"/>
    <property type="match status" value="1"/>
</dbReference>
<comment type="function">
    <text evidence="1">Catalyzes the initial step of the lipid cycle reactions in the biosynthesis of the cell wall peptidoglycan: transfers peptidoglycan precursor phospho-MurNAc-pentapeptide from UDP-MurNAc-pentapeptide onto the lipid carrier undecaprenyl phosphate, yielding undecaprenyl-pyrophosphoryl-MurNAc-pentapeptide, known as lipid I.</text>
</comment>
<comment type="catalytic activity">
    <reaction evidence="1">
        <text>UDP-N-acetyl-alpha-D-muramoyl-L-alanyl-gamma-D-glutamyl-meso-2,6-diaminopimeloyl-D-alanyl-D-alanine + di-trans,octa-cis-undecaprenyl phosphate = di-trans,octa-cis-undecaprenyl diphospho-N-acetyl-alpha-D-muramoyl-L-alanyl-D-glutamyl-meso-2,6-diaminopimeloyl-D-alanyl-D-alanine + UMP</text>
        <dbReference type="Rhea" id="RHEA:28386"/>
        <dbReference type="ChEBI" id="CHEBI:57865"/>
        <dbReference type="ChEBI" id="CHEBI:60392"/>
        <dbReference type="ChEBI" id="CHEBI:61386"/>
        <dbReference type="ChEBI" id="CHEBI:61387"/>
        <dbReference type="EC" id="2.7.8.13"/>
    </reaction>
</comment>
<comment type="cofactor">
    <cofactor evidence="1">
        <name>Mg(2+)</name>
        <dbReference type="ChEBI" id="CHEBI:18420"/>
    </cofactor>
</comment>
<comment type="pathway">
    <text evidence="1">Cell wall biogenesis; peptidoglycan biosynthesis.</text>
</comment>
<comment type="subcellular location">
    <subcellularLocation>
        <location evidence="1">Cell inner membrane</location>
        <topology evidence="1">Multi-pass membrane protein</topology>
    </subcellularLocation>
</comment>
<comment type="similarity">
    <text evidence="1">Belongs to the glycosyltransferase 4 family. MraY subfamily.</text>
</comment>
<gene>
    <name evidence="1" type="primary">mraY</name>
    <name type="ordered locus">APP7_0015</name>
</gene>